<dbReference type="EC" id="3.4.11.23" evidence="1"/>
<dbReference type="EMBL" id="BX936398">
    <property type="protein sequence ID" value="CAH22090.1"/>
    <property type="molecule type" value="Genomic_DNA"/>
</dbReference>
<dbReference type="RefSeq" id="WP_011192810.1">
    <property type="nucleotide sequence ID" value="NC_006155.1"/>
</dbReference>
<dbReference type="SMR" id="Q667Y8"/>
<dbReference type="MEROPS" id="M17.004"/>
<dbReference type="GeneID" id="49785139"/>
<dbReference type="KEGG" id="ypo:BZ17_3779"/>
<dbReference type="KEGG" id="yps:YPTB2852"/>
<dbReference type="PATRIC" id="fig|273123.14.peg.3965"/>
<dbReference type="Proteomes" id="UP000001011">
    <property type="component" value="Chromosome"/>
</dbReference>
<dbReference type="GO" id="GO:0005737">
    <property type="term" value="C:cytoplasm"/>
    <property type="evidence" value="ECO:0007669"/>
    <property type="project" value="UniProtKB-SubCell"/>
</dbReference>
<dbReference type="GO" id="GO:0030145">
    <property type="term" value="F:manganese ion binding"/>
    <property type="evidence" value="ECO:0007669"/>
    <property type="project" value="UniProtKB-UniRule"/>
</dbReference>
<dbReference type="GO" id="GO:0070006">
    <property type="term" value="F:metalloaminopeptidase activity"/>
    <property type="evidence" value="ECO:0007669"/>
    <property type="project" value="InterPro"/>
</dbReference>
<dbReference type="GO" id="GO:0006508">
    <property type="term" value="P:proteolysis"/>
    <property type="evidence" value="ECO:0007669"/>
    <property type="project" value="UniProtKB-UniRule"/>
</dbReference>
<dbReference type="CDD" id="cd00433">
    <property type="entry name" value="Peptidase_M17"/>
    <property type="match status" value="1"/>
</dbReference>
<dbReference type="FunFam" id="3.40.630.10:FF:000037">
    <property type="entry name" value="Peptidase B"/>
    <property type="match status" value="1"/>
</dbReference>
<dbReference type="Gene3D" id="3.40.630.10">
    <property type="entry name" value="Zn peptidases"/>
    <property type="match status" value="1"/>
</dbReference>
<dbReference type="HAMAP" id="MF_00504">
    <property type="entry name" value="Aminopeptidase_M17"/>
    <property type="match status" value="1"/>
</dbReference>
<dbReference type="InterPro" id="IPR011356">
    <property type="entry name" value="Leucine_aapep/pepB"/>
</dbReference>
<dbReference type="InterPro" id="IPR047620">
    <property type="entry name" value="M17_PepB-like_N"/>
</dbReference>
<dbReference type="InterPro" id="IPR008330">
    <property type="entry name" value="Pept_M17_PepB"/>
</dbReference>
<dbReference type="InterPro" id="IPR000819">
    <property type="entry name" value="Peptidase_M17_C"/>
</dbReference>
<dbReference type="NCBIfam" id="NF003450">
    <property type="entry name" value="PRK05015.1"/>
    <property type="match status" value="1"/>
</dbReference>
<dbReference type="PANTHER" id="PTHR11963">
    <property type="entry name" value="LEUCINE AMINOPEPTIDASE-RELATED"/>
    <property type="match status" value="1"/>
</dbReference>
<dbReference type="PANTHER" id="PTHR11963:SF20">
    <property type="entry name" value="PEPTIDASE B"/>
    <property type="match status" value="1"/>
</dbReference>
<dbReference type="Pfam" id="PF12404">
    <property type="entry name" value="DUF3663"/>
    <property type="match status" value="1"/>
</dbReference>
<dbReference type="Pfam" id="PF00883">
    <property type="entry name" value="Peptidase_M17"/>
    <property type="match status" value="1"/>
</dbReference>
<dbReference type="PIRSF" id="PIRSF036388">
    <property type="entry name" value="Ctsl_amnpptdse_B"/>
    <property type="match status" value="1"/>
</dbReference>
<dbReference type="PRINTS" id="PR00481">
    <property type="entry name" value="LAMNOPPTDASE"/>
</dbReference>
<dbReference type="SUPFAM" id="SSF53187">
    <property type="entry name" value="Zn-dependent exopeptidases"/>
    <property type="match status" value="1"/>
</dbReference>
<dbReference type="PROSITE" id="PS00631">
    <property type="entry name" value="CYTOSOL_AP"/>
    <property type="match status" value="1"/>
</dbReference>
<proteinExistence type="inferred from homology"/>
<reference key="1">
    <citation type="journal article" date="2004" name="Proc. Natl. Acad. Sci. U.S.A.">
        <title>Insights into the evolution of Yersinia pestis through whole-genome comparison with Yersinia pseudotuberculosis.</title>
        <authorList>
            <person name="Chain P.S.G."/>
            <person name="Carniel E."/>
            <person name="Larimer F.W."/>
            <person name="Lamerdin J."/>
            <person name="Stoutland P.O."/>
            <person name="Regala W.M."/>
            <person name="Georgescu A.M."/>
            <person name="Vergez L.M."/>
            <person name="Land M.L."/>
            <person name="Motin V.L."/>
            <person name="Brubaker R.R."/>
            <person name="Fowler J."/>
            <person name="Hinnebusch J."/>
            <person name="Marceau M."/>
            <person name="Medigue C."/>
            <person name="Simonet M."/>
            <person name="Chenal-Francisque V."/>
            <person name="Souza B."/>
            <person name="Dacheux D."/>
            <person name="Elliott J.M."/>
            <person name="Derbise A."/>
            <person name="Hauser L.J."/>
            <person name="Garcia E."/>
        </authorList>
    </citation>
    <scope>NUCLEOTIDE SEQUENCE [LARGE SCALE GENOMIC DNA]</scope>
    <source>
        <strain>IP32953</strain>
    </source>
</reference>
<protein>
    <recommendedName>
        <fullName evidence="1">Peptidase B</fullName>
        <ecNumber evidence="1">3.4.11.23</ecNumber>
    </recommendedName>
    <alternativeName>
        <fullName evidence="1">Aminopeptidase B</fullName>
    </alternativeName>
</protein>
<sequence length="432" mass="46531">MTTEIMQISLSHNPADARWGEKALISTNDQGVTIHLTSHDQLGGIQRAARKIDGQGIKQVKLAGEGWGLEQSWAFWQGFRGPKGQRSVVWAELPANEKTELEQRLQIIDWVRDTINAPAEDLGPEQLAKNAIDLLCAVSCDAVSYRITKGEDLREQNYAGIYTVGRGSDRAPVLLALDYNPTGNPDAPVMACLVGKGITFDSGGYSLKQSAFMDSMKSDMGGAATLTGALALAAARGLKERVKLYLCCADNMVSGNAFKLGDIIRYRNGKTVEIMNTDAEGRLVLADGLIDASEQNAPLIIDAATLTGAAKTALGNDYHALFSFDDELAQALLNSAHSEHELFWRLPLAEFHRSQLPSNFAELNNVAGGAYSAGASTAAAFLSHFVKNYQQGWLHIDCSATYRKSAVDQWSAGATGLGVRTVANLLLAQAKQ</sequence>
<gene>
    <name evidence="1" type="primary">pepB</name>
    <name type="ordered locus">YPTB2852</name>
</gene>
<accession>Q667Y8</accession>
<feature type="chain" id="PRO_0000165852" description="Peptidase B">
    <location>
        <begin position="1"/>
        <end position="432"/>
    </location>
</feature>
<feature type="active site" evidence="1">
    <location>
        <position position="208"/>
    </location>
</feature>
<feature type="active site" evidence="1">
    <location>
        <position position="282"/>
    </location>
</feature>
<feature type="binding site" evidence="1">
    <location>
        <position position="196"/>
    </location>
    <ligand>
        <name>Mn(2+)</name>
        <dbReference type="ChEBI" id="CHEBI:29035"/>
        <label>2</label>
    </ligand>
</feature>
<feature type="binding site" evidence="1">
    <location>
        <position position="201"/>
    </location>
    <ligand>
        <name>Mn(2+)</name>
        <dbReference type="ChEBI" id="CHEBI:29035"/>
        <label>1</label>
    </ligand>
</feature>
<feature type="binding site" evidence="1">
    <location>
        <position position="201"/>
    </location>
    <ligand>
        <name>Mn(2+)</name>
        <dbReference type="ChEBI" id="CHEBI:29035"/>
        <label>2</label>
    </ligand>
</feature>
<feature type="binding site" evidence="1">
    <location>
        <position position="219"/>
    </location>
    <ligand>
        <name>Mn(2+)</name>
        <dbReference type="ChEBI" id="CHEBI:29035"/>
        <label>2</label>
    </ligand>
</feature>
<feature type="binding site" evidence="1">
    <location>
        <position position="278"/>
    </location>
    <ligand>
        <name>Mn(2+)</name>
        <dbReference type="ChEBI" id="CHEBI:29035"/>
        <label>1</label>
    </ligand>
</feature>
<feature type="binding site" evidence="1">
    <location>
        <position position="280"/>
    </location>
    <ligand>
        <name>Mn(2+)</name>
        <dbReference type="ChEBI" id="CHEBI:29035"/>
        <label>1</label>
    </ligand>
</feature>
<feature type="binding site" evidence="1">
    <location>
        <position position="280"/>
    </location>
    <ligand>
        <name>Mn(2+)</name>
        <dbReference type="ChEBI" id="CHEBI:29035"/>
        <label>2</label>
    </ligand>
</feature>
<evidence type="ECO:0000255" key="1">
    <source>
        <dbReference type="HAMAP-Rule" id="MF_00504"/>
    </source>
</evidence>
<name>PEPB_YERPS</name>
<keyword id="KW-0031">Aminopeptidase</keyword>
<keyword id="KW-0963">Cytoplasm</keyword>
<keyword id="KW-0378">Hydrolase</keyword>
<keyword id="KW-0464">Manganese</keyword>
<keyword id="KW-0479">Metal-binding</keyword>
<keyword id="KW-0645">Protease</keyword>
<comment type="function">
    <text evidence="1">Probably plays an important role in intracellular peptide degradation.</text>
</comment>
<comment type="catalytic activity">
    <reaction evidence="1">
        <text>Release of an N-terminal amino acid, Xaa, from a peptide or arylamide. Xaa is preferably Glu or Asp but may be other amino acids, including Leu, Met, His, Cys and Gln.</text>
        <dbReference type="EC" id="3.4.11.23"/>
    </reaction>
</comment>
<comment type="cofactor">
    <cofactor evidence="1">
        <name>Mn(2+)</name>
        <dbReference type="ChEBI" id="CHEBI:29035"/>
    </cofactor>
    <text evidence="1">Binds 2 manganese ions per subunit.</text>
</comment>
<comment type="subunit">
    <text evidence="1">Homohexamer.</text>
</comment>
<comment type="subcellular location">
    <subcellularLocation>
        <location evidence="1">Cytoplasm</location>
    </subcellularLocation>
</comment>
<comment type="similarity">
    <text evidence="1">Belongs to the peptidase M17 family.</text>
</comment>
<organism>
    <name type="scientific">Yersinia pseudotuberculosis serotype I (strain IP32953)</name>
    <dbReference type="NCBI Taxonomy" id="273123"/>
    <lineage>
        <taxon>Bacteria</taxon>
        <taxon>Pseudomonadati</taxon>
        <taxon>Pseudomonadota</taxon>
        <taxon>Gammaproteobacteria</taxon>
        <taxon>Enterobacterales</taxon>
        <taxon>Yersiniaceae</taxon>
        <taxon>Yersinia</taxon>
    </lineage>
</organism>